<accession>P80146</accession>
<reference key="1">
    <citation type="journal article" date="1995" name="Microbiology">
        <title>A gene encoding a thermophilic alkaline serine proteinase from Thermus sp. strain Rt41A and its expression in Escherichia coli.</title>
        <authorList>
            <person name="Munro G.K."/>
            <person name="McHale R.H."/>
            <person name="Saul D.J."/>
            <person name="Reeves R.A."/>
            <person name="Bergquist P.L."/>
        </authorList>
    </citation>
    <scope>NUCLEOTIDE SEQUENCE [GENOMIC DNA]</scope>
</reference>
<reference key="2">
    <citation type="submission" date="2004-12" db="EMBL/GenBank/DDBJ databases">
        <authorList>
            <person name="Gibbs M."/>
        </authorList>
    </citation>
    <scope>SEQUENCE REVISION TO 34-120</scope>
</reference>
<reference key="3">
    <citation type="journal article" date="1992" name="Eur. J. Biochem.">
        <title>Purification and characterization of a thermostable proteinase isolated from Thermus sp. strain Rt41A.</title>
        <authorList>
            <person name="Peek K."/>
            <person name="Daniel R.M."/>
            <person name="Monk C."/>
            <person name="Parker L."/>
            <person name="Coolbear T."/>
        </authorList>
    </citation>
    <scope>PROTEIN SEQUENCE OF 133-147</scope>
    <scope>CHARACTERIZATION</scope>
</reference>
<keyword id="KW-0903">Direct protein sequencing</keyword>
<keyword id="KW-1015">Disulfide bond</keyword>
<keyword id="KW-0325">Glycoprotein</keyword>
<keyword id="KW-0378">Hydrolase</keyword>
<keyword id="KW-0645">Protease</keyword>
<keyword id="KW-0964">Secreted</keyword>
<keyword id="KW-0720">Serine protease</keyword>
<keyword id="KW-0732">Signal</keyword>
<name>SEPR_THESR</name>
<proteinExistence type="evidence at protein level"/>
<sequence length="410" mass="42876">MKRGGLWLLLGLLVLSACSSNPPAASTQEAPLLGLEAPEAIPGRYIVVYKENADVLPALEALKAALEPGLMQPQGLQAQALRTLGLEGARVDKVYTAALRGVAVEVPDQELARLRQDPRVAYIEADQEVRAFAVQSPATWGLDRIDQRTLPLDGRYTYTATGAGVHAYVVDTGILLSHQEFTGRIGKGYDAITPGGSAQDCNGHGTHVAGTIGGTTYGVAKGVTLHPVRVLDCNGSGSNSSVIAGLDWVTQNHVKPAVINMSLGGGASTALDTAVMNAINAGVTVVVAAGNDNRDACFYSPARVTAAITVGATTSTDYRASFSNYGRCLDLFAPGQSITSAWYTSSTATNTISGTSMATPHVTGAAALYLQWYPTATPSQVASALLYYATPNVVKNAGRYSPNLLLYTPF</sequence>
<evidence type="ECO:0000255" key="1"/>
<evidence type="ECO:0000255" key="2">
    <source>
        <dbReference type="PROSITE-ProRule" id="PRU01240"/>
    </source>
</evidence>
<evidence type="ECO:0000269" key="3">
    <source>
    </source>
</evidence>
<evidence type="ECO:0000305" key="4"/>
<organism>
    <name type="scientific">Thermus sp. (strain Rt41A)</name>
    <dbReference type="NCBI Taxonomy" id="32063"/>
    <lineage>
        <taxon>Bacteria</taxon>
        <taxon>Thermotogati</taxon>
        <taxon>Deinococcota</taxon>
        <taxon>Deinococci</taxon>
        <taxon>Thermales</taxon>
        <taxon>Thermaceae</taxon>
        <taxon>Thermus</taxon>
    </lineage>
</organism>
<protein>
    <recommendedName>
        <fullName>Extracellular serine proteinase</fullName>
        <ecNumber>3.4.21.-</ecNumber>
    </recommendedName>
</protein>
<dbReference type="EC" id="3.4.21.-"/>
<dbReference type="EMBL" id="U17342">
    <property type="protein sequence ID" value="AAA82980.2"/>
    <property type="molecule type" value="Genomic_DNA"/>
</dbReference>
<dbReference type="SMR" id="P80146"/>
<dbReference type="MEROPS" id="S08.008"/>
<dbReference type="GO" id="GO:0005615">
    <property type="term" value="C:extracellular space"/>
    <property type="evidence" value="ECO:0007669"/>
    <property type="project" value="TreeGrafter"/>
</dbReference>
<dbReference type="GO" id="GO:0004252">
    <property type="term" value="F:serine-type endopeptidase activity"/>
    <property type="evidence" value="ECO:0007669"/>
    <property type="project" value="InterPro"/>
</dbReference>
<dbReference type="GO" id="GO:0006508">
    <property type="term" value="P:proteolysis"/>
    <property type="evidence" value="ECO:0007669"/>
    <property type="project" value="UniProtKB-KW"/>
</dbReference>
<dbReference type="CDD" id="cd04077">
    <property type="entry name" value="Peptidases_S8_PCSK9_ProteinaseK_like"/>
    <property type="match status" value="1"/>
</dbReference>
<dbReference type="FunFam" id="3.40.50.200:FF:000014">
    <property type="entry name" value="Proteinase K"/>
    <property type="match status" value="1"/>
</dbReference>
<dbReference type="Gene3D" id="3.30.70.80">
    <property type="entry name" value="Peptidase S8 propeptide/proteinase inhibitor I9"/>
    <property type="match status" value="1"/>
</dbReference>
<dbReference type="Gene3D" id="3.40.50.200">
    <property type="entry name" value="Peptidase S8/S53 domain"/>
    <property type="match status" value="1"/>
</dbReference>
<dbReference type="InterPro" id="IPR034193">
    <property type="entry name" value="PCSK9_ProteinaseK-like"/>
</dbReference>
<dbReference type="InterPro" id="IPR000209">
    <property type="entry name" value="Peptidase_S8/S53_dom"/>
</dbReference>
<dbReference type="InterPro" id="IPR036852">
    <property type="entry name" value="Peptidase_S8/S53_dom_sf"/>
</dbReference>
<dbReference type="InterPro" id="IPR023827">
    <property type="entry name" value="Peptidase_S8_Asp-AS"/>
</dbReference>
<dbReference type="InterPro" id="IPR022398">
    <property type="entry name" value="Peptidase_S8_His-AS"/>
</dbReference>
<dbReference type="InterPro" id="IPR023828">
    <property type="entry name" value="Peptidase_S8_Ser-AS"/>
</dbReference>
<dbReference type="InterPro" id="IPR050131">
    <property type="entry name" value="Peptidase_S8_subtilisin-like"/>
</dbReference>
<dbReference type="InterPro" id="IPR015500">
    <property type="entry name" value="Peptidase_S8_subtilisin-rel"/>
</dbReference>
<dbReference type="InterPro" id="IPR010259">
    <property type="entry name" value="S8pro/Inhibitor_I9"/>
</dbReference>
<dbReference type="InterPro" id="IPR037045">
    <property type="entry name" value="S8pro/Inhibitor_I9_sf"/>
</dbReference>
<dbReference type="PANTHER" id="PTHR43806:SF11">
    <property type="entry name" value="CEREVISIN-RELATED"/>
    <property type="match status" value="1"/>
</dbReference>
<dbReference type="PANTHER" id="PTHR43806">
    <property type="entry name" value="PEPTIDASE S8"/>
    <property type="match status" value="1"/>
</dbReference>
<dbReference type="Pfam" id="PF05922">
    <property type="entry name" value="Inhibitor_I9"/>
    <property type="match status" value="1"/>
</dbReference>
<dbReference type="Pfam" id="PF00082">
    <property type="entry name" value="Peptidase_S8"/>
    <property type="match status" value="1"/>
</dbReference>
<dbReference type="PRINTS" id="PR00723">
    <property type="entry name" value="SUBTILISIN"/>
</dbReference>
<dbReference type="SUPFAM" id="SSF54897">
    <property type="entry name" value="Protease propeptides/inhibitors"/>
    <property type="match status" value="1"/>
</dbReference>
<dbReference type="SUPFAM" id="SSF52743">
    <property type="entry name" value="Subtilisin-like"/>
    <property type="match status" value="1"/>
</dbReference>
<dbReference type="PROSITE" id="PS51892">
    <property type="entry name" value="SUBTILASE"/>
    <property type="match status" value="1"/>
</dbReference>
<dbReference type="PROSITE" id="PS00136">
    <property type="entry name" value="SUBTILASE_ASP"/>
    <property type="match status" value="1"/>
</dbReference>
<dbReference type="PROSITE" id="PS00137">
    <property type="entry name" value="SUBTILASE_HIS"/>
    <property type="match status" value="1"/>
</dbReference>
<dbReference type="PROSITE" id="PS00138">
    <property type="entry name" value="SUBTILASE_SER"/>
    <property type="match status" value="1"/>
</dbReference>
<comment type="function">
    <text>Serine proteinase with preferred activity for amino acids with aromatic side groups at the P1' side of the scissible bond.</text>
</comment>
<comment type="biophysicochemical properties">
    <temperatureDependence>
        <text>Thermostable.</text>
    </temperatureDependence>
</comment>
<comment type="subcellular location">
    <subcellularLocation>
        <location>Secreted</location>
    </subcellularLocation>
</comment>
<comment type="PTM">
    <text>Contains 4 Cys residues that form two disulfide bonds.</text>
</comment>
<comment type="PTM">
    <text evidence="3">Glycosylated. This proteinase has a 0.7% carbohydrate content.</text>
</comment>
<comment type="similarity">
    <text evidence="4">Belongs to the peptidase S8 family.</text>
</comment>
<feature type="signal peptide" evidence="1">
    <location>
        <begin position="1"/>
        <end position="19"/>
    </location>
</feature>
<feature type="propeptide" id="PRO_0000027161" evidence="3">
    <location>
        <begin position="20"/>
        <end position="132"/>
    </location>
</feature>
<feature type="chain" id="PRO_0000027162" description="Extracellular serine proteinase">
    <location>
        <begin position="133"/>
        <end position="410"/>
    </location>
</feature>
<feature type="domain" description="Inhibitor I9" evidence="1">
    <location>
        <begin position="45"/>
        <end position="130"/>
    </location>
</feature>
<feature type="domain" description="Peptidase S8" evidence="2">
    <location>
        <begin position="139"/>
        <end position="410"/>
    </location>
</feature>
<feature type="active site" description="Charge relay system" evidence="2">
    <location>
        <position position="171"/>
    </location>
</feature>
<feature type="active site" description="Charge relay system" evidence="2">
    <location>
        <position position="204"/>
    </location>
</feature>
<feature type="active site" description="Charge relay system" evidence="2">
    <location>
        <position position="356"/>
    </location>
</feature>